<sequence length="65" mass="7532">MPKMKTRQSAAKRYEVTGSGKLRRRRAGKNHLLQHKSAARKRSLSTKVEVSETDLYKVTRQCPYL</sequence>
<reference key="1">
    <citation type="journal article" date="2003" name="DNA Res.">
        <title>Complete genome structure of Gloeobacter violaceus PCC 7421, a cyanobacterium that lacks thylakoids.</title>
        <authorList>
            <person name="Nakamura Y."/>
            <person name="Kaneko T."/>
            <person name="Sato S."/>
            <person name="Mimuro M."/>
            <person name="Miyashita H."/>
            <person name="Tsuchiya T."/>
            <person name="Sasamoto S."/>
            <person name="Watanabe A."/>
            <person name="Kawashima K."/>
            <person name="Kishida Y."/>
            <person name="Kiyokawa C."/>
            <person name="Kohara M."/>
            <person name="Matsumoto M."/>
            <person name="Matsuno A."/>
            <person name="Nakazaki N."/>
            <person name="Shimpo S."/>
            <person name="Takeuchi C."/>
            <person name="Yamada M."/>
            <person name="Tabata S."/>
        </authorList>
    </citation>
    <scope>NUCLEOTIDE SEQUENCE [LARGE SCALE GENOMIC DNA]</scope>
    <source>
        <strain>ATCC 29082 / PCC 7421</strain>
    </source>
</reference>
<organism>
    <name type="scientific">Gloeobacter violaceus (strain ATCC 29082 / PCC 7421)</name>
    <dbReference type="NCBI Taxonomy" id="251221"/>
    <lineage>
        <taxon>Bacteria</taxon>
        <taxon>Bacillati</taxon>
        <taxon>Cyanobacteriota</taxon>
        <taxon>Cyanophyceae</taxon>
        <taxon>Gloeobacterales</taxon>
        <taxon>Gloeobacteraceae</taxon>
        <taxon>Gloeobacter</taxon>
    </lineage>
</organism>
<accession>Q7NGV2</accession>
<feature type="chain" id="PRO_0000177364" description="Large ribosomal subunit protein bL35">
    <location>
        <begin position="1"/>
        <end position="65"/>
    </location>
</feature>
<feature type="region of interest" description="Disordered" evidence="2">
    <location>
        <begin position="1"/>
        <end position="46"/>
    </location>
</feature>
<feature type="compositionally biased region" description="Basic residues" evidence="2">
    <location>
        <begin position="21"/>
        <end position="44"/>
    </location>
</feature>
<protein>
    <recommendedName>
        <fullName evidence="1">Large ribosomal subunit protein bL35</fullName>
    </recommendedName>
    <alternativeName>
        <fullName evidence="3">50S ribosomal protein L35</fullName>
    </alternativeName>
</protein>
<gene>
    <name evidence="1" type="primary">rpmI</name>
    <name evidence="1" type="synonym">rpl35</name>
    <name type="ordered locus">gsl2785</name>
</gene>
<proteinExistence type="inferred from homology"/>
<comment type="similarity">
    <text evidence="1">Belongs to the bacterial ribosomal protein bL35 family.</text>
</comment>
<keyword id="KW-1185">Reference proteome</keyword>
<keyword id="KW-0687">Ribonucleoprotein</keyword>
<keyword id="KW-0689">Ribosomal protein</keyword>
<evidence type="ECO:0000255" key="1">
    <source>
        <dbReference type="HAMAP-Rule" id="MF_00514"/>
    </source>
</evidence>
<evidence type="ECO:0000256" key="2">
    <source>
        <dbReference type="SAM" id="MobiDB-lite"/>
    </source>
</evidence>
<evidence type="ECO:0000305" key="3"/>
<name>RL35_GLOVI</name>
<dbReference type="EMBL" id="BA000045">
    <property type="protein sequence ID" value="BAC90726.1"/>
    <property type="molecule type" value="Genomic_DNA"/>
</dbReference>
<dbReference type="RefSeq" id="NP_925731.1">
    <property type="nucleotide sequence ID" value="NC_005125.1"/>
</dbReference>
<dbReference type="RefSeq" id="WP_011142779.1">
    <property type="nucleotide sequence ID" value="NC_005125.1"/>
</dbReference>
<dbReference type="SMR" id="Q7NGV2"/>
<dbReference type="FunCoup" id="Q7NGV2">
    <property type="interactions" value="95"/>
</dbReference>
<dbReference type="STRING" id="251221.gene:10760288"/>
<dbReference type="EnsemblBacteria" id="BAC90726">
    <property type="protein sequence ID" value="BAC90726"/>
    <property type="gene ID" value="BAC90726"/>
</dbReference>
<dbReference type="KEGG" id="gvi:gsl2785"/>
<dbReference type="PATRIC" id="fig|251221.4.peg.2814"/>
<dbReference type="eggNOG" id="COG0291">
    <property type="taxonomic scope" value="Bacteria"/>
</dbReference>
<dbReference type="HOGENOM" id="CLU_169643_4_0_3"/>
<dbReference type="InParanoid" id="Q7NGV2"/>
<dbReference type="OrthoDB" id="47476at2"/>
<dbReference type="PhylomeDB" id="Q7NGV2"/>
<dbReference type="Proteomes" id="UP000000557">
    <property type="component" value="Chromosome"/>
</dbReference>
<dbReference type="GO" id="GO:0022625">
    <property type="term" value="C:cytosolic large ribosomal subunit"/>
    <property type="evidence" value="ECO:0000318"/>
    <property type="project" value="GO_Central"/>
</dbReference>
<dbReference type="GO" id="GO:0003735">
    <property type="term" value="F:structural constituent of ribosome"/>
    <property type="evidence" value="ECO:0000318"/>
    <property type="project" value="GO_Central"/>
</dbReference>
<dbReference type="GO" id="GO:0006412">
    <property type="term" value="P:translation"/>
    <property type="evidence" value="ECO:0007669"/>
    <property type="project" value="UniProtKB-UniRule"/>
</dbReference>
<dbReference type="FunFam" id="4.10.410.60:FF:000001">
    <property type="entry name" value="50S ribosomal protein L35"/>
    <property type="match status" value="1"/>
</dbReference>
<dbReference type="Gene3D" id="4.10.410.60">
    <property type="match status" value="1"/>
</dbReference>
<dbReference type="HAMAP" id="MF_00514">
    <property type="entry name" value="Ribosomal_bL35"/>
    <property type="match status" value="1"/>
</dbReference>
<dbReference type="InterPro" id="IPR001706">
    <property type="entry name" value="Ribosomal_bL35"/>
</dbReference>
<dbReference type="InterPro" id="IPR021137">
    <property type="entry name" value="Ribosomal_bL35-like"/>
</dbReference>
<dbReference type="InterPro" id="IPR018265">
    <property type="entry name" value="Ribosomal_bL35_CS"/>
</dbReference>
<dbReference type="InterPro" id="IPR037229">
    <property type="entry name" value="Ribosomal_bL35_sf"/>
</dbReference>
<dbReference type="NCBIfam" id="TIGR00001">
    <property type="entry name" value="rpmI_bact"/>
    <property type="match status" value="1"/>
</dbReference>
<dbReference type="PANTHER" id="PTHR33343">
    <property type="entry name" value="54S RIBOSOMAL PROTEIN BL35M"/>
    <property type="match status" value="1"/>
</dbReference>
<dbReference type="PANTHER" id="PTHR33343:SF1">
    <property type="entry name" value="LARGE RIBOSOMAL SUBUNIT PROTEIN BL35M"/>
    <property type="match status" value="1"/>
</dbReference>
<dbReference type="Pfam" id="PF01632">
    <property type="entry name" value="Ribosomal_L35p"/>
    <property type="match status" value="1"/>
</dbReference>
<dbReference type="PRINTS" id="PR00064">
    <property type="entry name" value="RIBOSOMALL35"/>
</dbReference>
<dbReference type="SUPFAM" id="SSF143034">
    <property type="entry name" value="L35p-like"/>
    <property type="match status" value="1"/>
</dbReference>
<dbReference type="PROSITE" id="PS00936">
    <property type="entry name" value="RIBOSOMAL_L35"/>
    <property type="match status" value="1"/>
</dbReference>